<dbReference type="EC" id="2.7.7.6" evidence="1"/>
<dbReference type="EMBL" id="BA000001">
    <property type="protein sequence ID" value="BAA30655.1"/>
    <property type="molecule type" value="Genomic_DNA"/>
</dbReference>
<dbReference type="PIR" id="G71031">
    <property type="entry name" value="G71031"/>
</dbReference>
<dbReference type="RefSeq" id="WP_010885623.1">
    <property type="nucleotide sequence ID" value="NC_000961.1"/>
</dbReference>
<dbReference type="SMR" id="O93777"/>
<dbReference type="STRING" id="70601.gene:9378530"/>
<dbReference type="EnsemblBacteria" id="BAA30655">
    <property type="protein sequence ID" value="BAA30655"/>
    <property type="gene ID" value="BAA30655"/>
</dbReference>
<dbReference type="GeneID" id="1443863"/>
<dbReference type="KEGG" id="pho:PH1544"/>
<dbReference type="eggNOG" id="arCOG04256">
    <property type="taxonomic scope" value="Archaea"/>
</dbReference>
<dbReference type="OrthoDB" id="372142at2157"/>
<dbReference type="Proteomes" id="UP000000752">
    <property type="component" value="Chromosome"/>
</dbReference>
<dbReference type="GO" id="GO:0005737">
    <property type="term" value="C:cytoplasm"/>
    <property type="evidence" value="ECO:0007669"/>
    <property type="project" value="UniProtKB-SubCell"/>
</dbReference>
<dbReference type="GO" id="GO:0000428">
    <property type="term" value="C:DNA-directed RNA polymerase complex"/>
    <property type="evidence" value="ECO:0007669"/>
    <property type="project" value="UniProtKB-KW"/>
</dbReference>
<dbReference type="GO" id="GO:0003677">
    <property type="term" value="F:DNA binding"/>
    <property type="evidence" value="ECO:0007669"/>
    <property type="project" value="UniProtKB-UniRule"/>
</dbReference>
<dbReference type="GO" id="GO:0003899">
    <property type="term" value="F:DNA-directed RNA polymerase activity"/>
    <property type="evidence" value="ECO:0007669"/>
    <property type="project" value="UniProtKB-UniRule"/>
</dbReference>
<dbReference type="GO" id="GO:0006351">
    <property type="term" value="P:DNA-templated transcription"/>
    <property type="evidence" value="ECO:0007669"/>
    <property type="project" value="UniProtKB-UniRule"/>
</dbReference>
<dbReference type="CDD" id="cd06528">
    <property type="entry name" value="RNAP_A"/>
    <property type="match status" value="1"/>
</dbReference>
<dbReference type="Gene3D" id="1.10.150.390">
    <property type="match status" value="1"/>
</dbReference>
<dbReference type="HAMAP" id="MF_00411">
    <property type="entry name" value="RNApol_arch_Rpo1C"/>
    <property type="match status" value="1"/>
</dbReference>
<dbReference type="InterPro" id="IPR045867">
    <property type="entry name" value="DNA-dir_RpoC_beta_prime"/>
</dbReference>
<dbReference type="InterPro" id="IPR007081">
    <property type="entry name" value="RNA_pol_Rpb1_5"/>
</dbReference>
<dbReference type="InterPro" id="IPR012757">
    <property type="entry name" value="RPO1C"/>
</dbReference>
<dbReference type="NCBIfam" id="TIGR02389">
    <property type="entry name" value="RNA_pol_rpoA2"/>
    <property type="match status" value="1"/>
</dbReference>
<dbReference type="PANTHER" id="PTHR19376">
    <property type="entry name" value="DNA-DIRECTED RNA POLYMERASE"/>
    <property type="match status" value="1"/>
</dbReference>
<dbReference type="PANTHER" id="PTHR19376:SF32">
    <property type="entry name" value="DNA-DIRECTED RNA POLYMERASE III SUBUNIT RPC1"/>
    <property type="match status" value="1"/>
</dbReference>
<dbReference type="Pfam" id="PF04998">
    <property type="entry name" value="RNA_pol_Rpb1_5"/>
    <property type="match status" value="1"/>
</dbReference>
<dbReference type="SUPFAM" id="SSF64484">
    <property type="entry name" value="beta and beta-prime subunits of DNA dependent RNA-polymerase"/>
    <property type="match status" value="1"/>
</dbReference>
<sequence>MVSSSTIKSLIEKKGKDLPESVKQELYEKLIKYNEKYKLTKVEVETIIDEVIKEYEKALIEPGEAVGTVAAQSIGEPSTQMTLNTFHYAGVAEINVTLGLPRIIEIVDARKNPSTPMMTVYLDEEHRYDREKAEEVARRIEGTTLENLARTTTLDLINMEFIVEVDPERLEKSGLTMEKILKKLQSSFKSAEFEADGYTLIVRPKKIEKISDLRRLSEKVKKHRLKGLSGVGKTIIRKEGDEYVIYTEGSNFKQVLKVPGVDPTRTRTNNIHEIAEVLGIEAARNAIIEEIINTMHEQGLEVDIRHIMLVADIMTLDGVVRPIGRHGVVGEKASVLARAAFEITVQHLFEAAERGEVDNLSGVIENVLIGQPVPVGTGMVKLTMKLPLKPQKEKEEV</sequence>
<evidence type="ECO:0000255" key="1">
    <source>
        <dbReference type="HAMAP-Rule" id="MF_00411"/>
    </source>
</evidence>
<comment type="function">
    <text evidence="1">DNA-dependent RNA polymerase (RNAP) catalyzes the transcription of DNA into RNA using the four ribonucleoside triphosphates as substrates. Forms part of the jaw domain.</text>
</comment>
<comment type="catalytic activity">
    <reaction evidence="1">
        <text>RNA(n) + a ribonucleoside 5'-triphosphate = RNA(n+1) + diphosphate</text>
        <dbReference type="Rhea" id="RHEA:21248"/>
        <dbReference type="Rhea" id="RHEA-COMP:14527"/>
        <dbReference type="Rhea" id="RHEA-COMP:17342"/>
        <dbReference type="ChEBI" id="CHEBI:33019"/>
        <dbReference type="ChEBI" id="CHEBI:61557"/>
        <dbReference type="ChEBI" id="CHEBI:140395"/>
        <dbReference type="EC" id="2.7.7.6"/>
    </reaction>
</comment>
<comment type="subunit">
    <text evidence="1">Part of the RNA polymerase complex.</text>
</comment>
<comment type="subcellular location">
    <subcellularLocation>
        <location evidence="1">Cytoplasm</location>
    </subcellularLocation>
</comment>
<comment type="similarity">
    <text evidence="1">Belongs to the RNA polymerase beta' chain family.</text>
</comment>
<reference key="1">
    <citation type="journal article" date="1998" name="DNA Res.">
        <title>Complete sequence and gene organization of the genome of a hyper-thermophilic archaebacterium, Pyrococcus horikoshii OT3.</title>
        <authorList>
            <person name="Kawarabayasi Y."/>
            <person name="Sawada M."/>
            <person name="Horikawa H."/>
            <person name="Haikawa Y."/>
            <person name="Hino Y."/>
            <person name="Yamamoto S."/>
            <person name="Sekine M."/>
            <person name="Baba S."/>
            <person name="Kosugi H."/>
            <person name="Hosoyama A."/>
            <person name="Nagai Y."/>
            <person name="Sakai M."/>
            <person name="Ogura K."/>
            <person name="Otsuka R."/>
            <person name="Nakazawa H."/>
            <person name="Takamiya M."/>
            <person name="Ohfuku Y."/>
            <person name="Funahashi T."/>
            <person name="Tanaka T."/>
            <person name="Kudoh Y."/>
            <person name="Yamazaki J."/>
            <person name="Kushida N."/>
            <person name="Oguchi A."/>
            <person name="Aoki K."/>
            <person name="Yoshizawa T."/>
            <person name="Nakamura Y."/>
            <person name="Robb F.T."/>
            <person name="Horikoshi K."/>
            <person name="Masuchi Y."/>
            <person name="Shizuya H."/>
            <person name="Kikuchi H."/>
        </authorList>
    </citation>
    <scope>NUCLEOTIDE SEQUENCE [LARGE SCALE GENOMIC DNA]</scope>
    <source>
        <strain>ATCC 700860 / DSM 12428 / JCM 9974 / NBRC 100139 / OT-3</strain>
    </source>
</reference>
<keyword id="KW-0963">Cytoplasm</keyword>
<keyword id="KW-0238">DNA-binding</keyword>
<keyword id="KW-0240">DNA-directed RNA polymerase</keyword>
<keyword id="KW-0548">Nucleotidyltransferase</keyword>
<keyword id="KW-0804">Transcription</keyword>
<keyword id="KW-0808">Transferase</keyword>
<feature type="chain" id="PRO_0000074023" description="DNA-directed RNA polymerase subunit Rpo1C">
    <location>
        <begin position="1"/>
        <end position="397"/>
    </location>
</feature>
<accession>O93777</accession>
<name>RPO1C_PYRHO</name>
<proteinExistence type="inferred from homology"/>
<protein>
    <recommendedName>
        <fullName evidence="1">DNA-directed RNA polymerase subunit Rpo1C</fullName>
        <ecNumber evidence="1">2.7.7.6</ecNumber>
    </recommendedName>
    <alternativeName>
        <fullName evidence="1">DNA-directed RNA polymerase subunit A''</fullName>
    </alternativeName>
</protein>
<organism>
    <name type="scientific">Pyrococcus horikoshii (strain ATCC 700860 / DSM 12428 / JCM 9974 / NBRC 100139 / OT-3)</name>
    <dbReference type="NCBI Taxonomy" id="70601"/>
    <lineage>
        <taxon>Archaea</taxon>
        <taxon>Methanobacteriati</taxon>
        <taxon>Methanobacteriota</taxon>
        <taxon>Thermococci</taxon>
        <taxon>Thermococcales</taxon>
        <taxon>Thermococcaceae</taxon>
        <taxon>Pyrococcus</taxon>
    </lineage>
</organism>
<gene>
    <name evidence="1" type="primary">rpo1C</name>
    <name evidence="1" type="synonym">rpoA2</name>
    <name type="ordered locus">PH1544</name>
</gene>